<protein>
    <recommendedName>
        <fullName evidence="1">Serine--tRNA ligase</fullName>
        <ecNumber evidence="1">6.1.1.11</ecNumber>
    </recommendedName>
    <alternativeName>
        <fullName evidence="1">Seryl-tRNA synthetase</fullName>
        <shortName evidence="1">SerRS</shortName>
    </alternativeName>
    <alternativeName>
        <fullName evidence="1">Seryl-tRNA(Ser/Sec) synthetase</fullName>
    </alternativeName>
</protein>
<feature type="chain" id="PRO_1000098057" description="Serine--tRNA ligase">
    <location>
        <begin position="1"/>
        <end position="423"/>
    </location>
</feature>
<feature type="binding site" evidence="1">
    <location>
        <begin position="231"/>
        <end position="233"/>
    </location>
    <ligand>
        <name>L-serine</name>
        <dbReference type="ChEBI" id="CHEBI:33384"/>
    </ligand>
</feature>
<feature type="binding site" evidence="1">
    <location>
        <begin position="262"/>
        <end position="264"/>
    </location>
    <ligand>
        <name>ATP</name>
        <dbReference type="ChEBI" id="CHEBI:30616"/>
    </ligand>
</feature>
<feature type="binding site" evidence="1">
    <location>
        <position position="285"/>
    </location>
    <ligand>
        <name>L-serine</name>
        <dbReference type="ChEBI" id="CHEBI:33384"/>
    </ligand>
</feature>
<feature type="binding site" evidence="1">
    <location>
        <begin position="349"/>
        <end position="352"/>
    </location>
    <ligand>
        <name>ATP</name>
        <dbReference type="ChEBI" id="CHEBI:30616"/>
    </ligand>
</feature>
<feature type="binding site" evidence="1">
    <location>
        <position position="385"/>
    </location>
    <ligand>
        <name>L-serine</name>
        <dbReference type="ChEBI" id="CHEBI:33384"/>
    </ligand>
</feature>
<evidence type="ECO:0000255" key="1">
    <source>
        <dbReference type="HAMAP-Rule" id="MF_00176"/>
    </source>
</evidence>
<keyword id="KW-0030">Aminoacyl-tRNA synthetase</keyword>
<keyword id="KW-0067">ATP-binding</keyword>
<keyword id="KW-0963">Cytoplasm</keyword>
<keyword id="KW-0436">Ligase</keyword>
<keyword id="KW-0547">Nucleotide-binding</keyword>
<keyword id="KW-0648">Protein biosynthesis</keyword>
<comment type="function">
    <text evidence="1">Catalyzes the attachment of serine to tRNA(Ser). Is also able to aminoacylate tRNA(Sec) with serine, to form the misacylated tRNA L-seryl-tRNA(Sec), which will be further converted into selenocysteinyl-tRNA(Sec).</text>
</comment>
<comment type="catalytic activity">
    <reaction evidence="1">
        <text>tRNA(Ser) + L-serine + ATP = L-seryl-tRNA(Ser) + AMP + diphosphate + H(+)</text>
        <dbReference type="Rhea" id="RHEA:12292"/>
        <dbReference type="Rhea" id="RHEA-COMP:9669"/>
        <dbReference type="Rhea" id="RHEA-COMP:9703"/>
        <dbReference type="ChEBI" id="CHEBI:15378"/>
        <dbReference type="ChEBI" id="CHEBI:30616"/>
        <dbReference type="ChEBI" id="CHEBI:33019"/>
        <dbReference type="ChEBI" id="CHEBI:33384"/>
        <dbReference type="ChEBI" id="CHEBI:78442"/>
        <dbReference type="ChEBI" id="CHEBI:78533"/>
        <dbReference type="ChEBI" id="CHEBI:456215"/>
        <dbReference type="EC" id="6.1.1.11"/>
    </reaction>
</comment>
<comment type="catalytic activity">
    <reaction evidence="1">
        <text>tRNA(Sec) + L-serine + ATP = L-seryl-tRNA(Sec) + AMP + diphosphate + H(+)</text>
        <dbReference type="Rhea" id="RHEA:42580"/>
        <dbReference type="Rhea" id="RHEA-COMP:9742"/>
        <dbReference type="Rhea" id="RHEA-COMP:10128"/>
        <dbReference type="ChEBI" id="CHEBI:15378"/>
        <dbReference type="ChEBI" id="CHEBI:30616"/>
        <dbReference type="ChEBI" id="CHEBI:33019"/>
        <dbReference type="ChEBI" id="CHEBI:33384"/>
        <dbReference type="ChEBI" id="CHEBI:78442"/>
        <dbReference type="ChEBI" id="CHEBI:78533"/>
        <dbReference type="ChEBI" id="CHEBI:456215"/>
        <dbReference type="EC" id="6.1.1.11"/>
    </reaction>
</comment>
<comment type="pathway">
    <text evidence="1">Aminoacyl-tRNA biosynthesis; selenocysteinyl-tRNA(Sec) biosynthesis; L-seryl-tRNA(Sec) from L-serine and tRNA(Sec): step 1/1.</text>
</comment>
<comment type="subunit">
    <text evidence="1">Homodimer. The tRNA molecule binds across the dimer.</text>
</comment>
<comment type="subcellular location">
    <subcellularLocation>
        <location evidence="1">Cytoplasm</location>
    </subcellularLocation>
</comment>
<comment type="domain">
    <text evidence="1">Consists of two distinct domains, a catalytic core and a N-terminal extension that is involved in tRNA binding.</text>
</comment>
<comment type="similarity">
    <text evidence="1">Belongs to the class-II aminoacyl-tRNA synthetase family. Type-1 seryl-tRNA synthetase subfamily.</text>
</comment>
<reference key="1">
    <citation type="journal article" date="2009" name="Infect. Immun.">
        <title>Comparative genomics reveal extensive transposon-mediated genomic plasticity and diversity among potential effector proteins within the genus Coxiella.</title>
        <authorList>
            <person name="Beare P.A."/>
            <person name="Unsworth N."/>
            <person name="Andoh M."/>
            <person name="Voth D.E."/>
            <person name="Omsland A."/>
            <person name="Gilk S.D."/>
            <person name="Williams K.P."/>
            <person name="Sobral B.W."/>
            <person name="Kupko J.J. III"/>
            <person name="Porcella S.F."/>
            <person name="Samuel J.E."/>
            <person name="Heinzen R.A."/>
        </authorList>
    </citation>
    <scope>NUCLEOTIDE SEQUENCE [LARGE SCALE GENOMIC DNA]</scope>
    <source>
        <strain>CbuG_Q212</strain>
    </source>
</reference>
<gene>
    <name evidence="1" type="primary">serS</name>
    <name type="ordered locus">CbuG_0820</name>
</gene>
<sequence length="423" mass="48119">MLDPKILRQNLEHVVEKLRRRGFEMDSDTFLQLENKRKEAQLAIQSFQTKRNQLSKTIGMAKSKGENPEPLMAEVSQLNDELKQEEANFETIQKAFSDFQLAIPNLPHDSVPDGKSENDNREIRQWGAPPGFDFTPKDHTVLGERDNQLDFEAAAKLSGARFVVLRGSLARAHRALAQFMLDLHTDQHGYEEVYVPYLVHEECLYGTGQLPKFREEQFQVAGDRNFFLVPTGEVPLVNLARDEIIEAPALPKKWVAQTPCFRSEAGSYGKDVRGMIRQHQFQKVELVQLVQPENSYQALEEITRQAEKVLQLLALPYRVVELCAGDLGFAAAKTYDLEVWLPSQNKYREISSCSNCEDFQARRIQARWRNPKTGKPELLHTLNGSGLAVGRTLVAVMENYQQADGHIRVPDALKSYMGGVDYF</sequence>
<name>SYS_COXB2</name>
<proteinExistence type="inferred from homology"/>
<organism>
    <name type="scientific">Coxiella burnetii (strain CbuG_Q212)</name>
    <name type="common">Coxiella burnetii (strain Q212)</name>
    <dbReference type="NCBI Taxonomy" id="434923"/>
    <lineage>
        <taxon>Bacteria</taxon>
        <taxon>Pseudomonadati</taxon>
        <taxon>Pseudomonadota</taxon>
        <taxon>Gammaproteobacteria</taxon>
        <taxon>Legionellales</taxon>
        <taxon>Coxiellaceae</taxon>
        <taxon>Coxiella</taxon>
    </lineage>
</organism>
<accession>B6IZT4</accession>
<dbReference type="EC" id="6.1.1.11" evidence="1"/>
<dbReference type="EMBL" id="CP001019">
    <property type="protein sequence ID" value="ACJ18212.1"/>
    <property type="molecule type" value="Genomic_DNA"/>
</dbReference>
<dbReference type="RefSeq" id="WP_012569955.1">
    <property type="nucleotide sequence ID" value="NC_011527.1"/>
</dbReference>
<dbReference type="SMR" id="B6IZT4"/>
<dbReference type="KEGG" id="cbg:CbuG_0820"/>
<dbReference type="HOGENOM" id="CLU_023797_1_1_6"/>
<dbReference type="UniPathway" id="UPA00906">
    <property type="reaction ID" value="UER00895"/>
</dbReference>
<dbReference type="GO" id="GO:0005737">
    <property type="term" value="C:cytoplasm"/>
    <property type="evidence" value="ECO:0007669"/>
    <property type="project" value="UniProtKB-SubCell"/>
</dbReference>
<dbReference type="GO" id="GO:0005524">
    <property type="term" value="F:ATP binding"/>
    <property type="evidence" value="ECO:0007669"/>
    <property type="project" value="UniProtKB-UniRule"/>
</dbReference>
<dbReference type="GO" id="GO:0004828">
    <property type="term" value="F:serine-tRNA ligase activity"/>
    <property type="evidence" value="ECO:0007669"/>
    <property type="project" value="UniProtKB-UniRule"/>
</dbReference>
<dbReference type="GO" id="GO:0016260">
    <property type="term" value="P:selenocysteine biosynthetic process"/>
    <property type="evidence" value="ECO:0007669"/>
    <property type="project" value="UniProtKB-UniRule"/>
</dbReference>
<dbReference type="GO" id="GO:0006434">
    <property type="term" value="P:seryl-tRNA aminoacylation"/>
    <property type="evidence" value="ECO:0007669"/>
    <property type="project" value="UniProtKB-UniRule"/>
</dbReference>
<dbReference type="CDD" id="cd00770">
    <property type="entry name" value="SerRS_core"/>
    <property type="match status" value="1"/>
</dbReference>
<dbReference type="Gene3D" id="3.30.930.10">
    <property type="entry name" value="Bira Bifunctional Protein, Domain 2"/>
    <property type="match status" value="1"/>
</dbReference>
<dbReference type="Gene3D" id="1.10.287.40">
    <property type="entry name" value="Serine-tRNA synthetase, tRNA binding domain"/>
    <property type="match status" value="1"/>
</dbReference>
<dbReference type="HAMAP" id="MF_00176">
    <property type="entry name" value="Ser_tRNA_synth_type1"/>
    <property type="match status" value="1"/>
</dbReference>
<dbReference type="InterPro" id="IPR002314">
    <property type="entry name" value="aa-tRNA-synt_IIb"/>
</dbReference>
<dbReference type="InterPro" id="IPR006195">
    <property type="entry name" value="aa-tRNA-synth_II"/>
</dbReference>
<dbReference type="InterPro" id="IPR045864">
    <property type="entry name" value="aa-tRNA-synth_II/BPL/LPL"/>
</dbReference>
<dbReference type="InterPro" id="IPR002317">
    <property type="entry name" value="Ser-tRNA-ligase_type_1"/>
</dbReference>
<dbReference type="InterPro" id="IPR015866">
    <property type="entry name" value="Ser-tRNA-synth_1_N"/>
</dbReference>
<dbReference type="InterPro" id="IPR042103">
    <property type="entry name" value="SerRS_1_N_sf"/>
</dbReference>
<dbReference type="InterPro" id="IPR033729">
    <property type="entry name" value="SerRS_core"/>
</dbReference>
<dbReference type="InterPro" id="IPR010978">
    <property type="entry name" value="tRNA-bd_arm"/>
</dbReference>
<dbReference type="NCBIfam" id="TIGR00414">
    <property type="entry name" value="serS"/>
    <property type="match status" value="1"/>
</dbReference>
<dbReference type="PANTHER" id="PTHR43697:SF1">
    <property type="entry name" value="SERINE--TRNA LIGASE"/>
    <property type="match status" value="1"/>
</dbReference>
<dbReference type="PANTHER" id="PTHR43697">
    <property type="entry name" value="SERYL-TRNA SYNTHETASE"/>
    <property type="match status" value="1"/>
</dbReference>
<dbReference type="Pfam" id="PF02403">
    <property type="entry name" value="Seryl_tRNA_N"/>
    <property type="match status" value="1"/>
</dbReference>
<dbReference type="Pfam" id="PF00587">
    <property type="entry name" value="tRNA-synt_2b"/>
    <property type="match status" value="1"/>
</dbReference>
<dbReference type="PIRSF" id="PIRSF001529">
    <property type="entry name" value="Ser-tRNA-synth_IIa"/>
    <property type="match status" value="1"/>
</dbReference>
<dbReference type="PRINTS" id="PR00981">
    <property type="entry name" value="TRNASYNTHSER"/>
</dbReference>
<dbReference type="SUPFAM" id="SSF55681">
    <property type="entry name" value="Class II aaRS and biotin synthetases"/>
    <property type="match status" value="1"/>
</dbReference>
<dbReference type="SUPFAM" id="SSF46589">
    <property type="entry name" value="tRNA-binding arm"/>
    <property type="match status" value="1"/>
</dbReference>
<dbReference type="PROSITE" id="PS50862">
    <property type="entry name" value="AA_TRNA_LIGASE_II"/>
    <property type="match status" value="1"/>
</dbReference>